<name>NATD1_CHICK</name>
<evidence type="ECO:0000255" key="1">
    <source>
        <dbReference type="PROSITE-ProRule" id="PRU00532"/>
    </source>
</evidence>
<evidence type="ECO:0000305" key="2"/>
<dbReference type="EMBL" id="AJ720448">
    <property type="protein sequence ID" value="CAG32107.1"/>
    <property type="molecule type" value="mRNA"/>
</dbReference>
<dbReference type="RefSeq" id="NP_001025804.1">
    <property type="nucleotide sequence ID" value="NM_001030633.2"/>
</dbReference>
<dbReference type="SMR" id="Q5ZJI6"/>
<dbReference type="STRING" id="9031.ENSGALP00000007554"/>
<dbReference type="PaxDb" id="9031-ENSGALP00000007554"/>
<dbReference type="Ensembl" id="ENSGALT00010052358.1">
    <property type="protein sequence ID" value="ENSGALP00010031286.1"/>
    <property type="gene ID" value="ENSGALG00010021573.1"/>
</dbReference>
<dbReference type="GeneID" id="416497"/>
<dbReference type="KEGG" id="gga:416497"/>
<dbReference type="CTD" id="256302"/>
<dbReference type="VEuPathDB" id="HostDB:geneid_416497"/>
<dbReference type="eggNOG" id="ENOG502S2NM">
    <property type="taxonomic scope" value="Eukaryota"/>
</dbReference>
<dbReference type="GeneTree" id="ENSGT00390000014840"/>
<dbReference type="HOGENOM" id="CLU_132888_1_1_1"/>
<dbReference type="InParanoid" id="Q5ZJI6"/>
<dbReference type="OMA" id="EIMTITH"/>
<dbReference type="OrthoDB" id="74247at2759"/>
<dbReference type="PhylomeDB" id="Q5ZJI6"/>
<dbReference type="TreeFam" id="TF314063"/>
<dbReference type="PRO" id="PR:Q5ZJI6"/>
<dbReference type="Proteomes" id="UP000000539">
    <property type="component" value="Chromosome 14"/>
</dbReference>
<dbReference type="Bgee" id="ENSGALG00000004745">
    <property type="expression patterns" value="Expressed in testis and 13 other cell types or tissues"/>
</dbReference>
<dbReference type="FunFam" id="3.40.630.30:FF:000030">
    <property type="entry name" value="NATD1 isoform 1"/>
    <property type="match status" value="1"/>
</dbReference>
<dbReference type="Gene3D" id="3.40.630.30">
    <property type="match status" value="1"/>
</dbReference>
<dbReference type="InterPro" id="IPR016181">
    <property type="entry name" value="Acyl_CoA_acyltransferase"/>
</dbReference>
<dbReference type="InterPro" id="IPR045057">
    <property type="entry name" value="Gcn5-rel_NAT"/>
</dbReference>
<dbReference type="InterPro" id="IPR031165">
    <property type="entry name" value="GNAT_YJDJ"/>
</dbReference>
<dbReference type="PANTHER" id="PTHR31435">
    <property type="entry name" value="PROTEIN NATD1"/>
    <property type="match status" value="1"/>
</dbReference>
<dbReference type="PANTHER" id="PTHR31435:SF9">
    <property type="entry name" value="PROTEIN NATD1"/>
    <property type="match status" value="1"/>
</dbReference>
<dbReference type="Pfam" id="PF14542">
    <property type="entry name" value="Acetyltransf_CG"/>
    <property type="match status" value="1"/>
</dbReference>
<dbReference type="SUPFAM" id="SSF55729">
    <property type="entry name" value="Acyl-CoA N-acyltransferases (Nat)"/>
    <property type="match status" value="1"/>
</dbReference>
<dbReference type="PROSITE" id="PS51729">
    <property type="entry name" value="GNAT_YJDJ"/>
    <property type="match status" value="1"/>
</dbReference>
<organism>
    <name type="scientific">Gallus gallus</name>
    <name type="common">Chicken</name>
    <dbReference type="NCBI Taxonomy" id="9031"/>
    <lineage>
        <taxon>Eukaryota</taxon>
        <taxon>Metazoa</taxon>
        <taxon>Chordata</taxon>
        <taxon>Craniata</taxon>
        <taxon>Vertebrata</taxon>
        <taxon>Euteleostomi</taxon>
        <taxon>Archelosauria</taxon>
        <taxon>Archosauria</taxon>
        <taxon>Dinosauria</taxon>
        <taxon>Saurischia</taxon>
        <taxon>Theropoda</taxon>
        <taxon>Coelurosauria</taxon>
        <taxon>Aves</taxon>
        <taxon>Neognathae</taxon>
        <taxon>Galloanserae</taxon>
        <taxon>Galliformes</taxon>
        <taxon>Phasianidae</taxon>
        <taxon>Phasianinae</taxon>
        <taxon>Gallus</taxon>
    </lineage>
</organism>
<protein>
    <recommendedName>
        <fullName>Protein NATD1</fullName>
    </recommendedName>
    <alternativeName>
        <fullName>N-acetyltransferase domain-containing protein 1</fullName>
    </alternativeName>
</protein>
<reference key="1">
    <citation type="journal article" date="2005" name="Genome Biol.">
        <title>Full-length cDNAs from chicken bursal lymphocytes to facilitate gene function analysis.</title>
        <authorList>
            <person name="Caldwell R.B."/>
            <person name="Kierzek A.M."/>
            <person name="Arakawa H."/>
            <person name="Bezzubov Y."/>
            <person name="Zaim J."/>
            <person name="Fiedler P."/>
            <person name="Kutter S."/>
            <person name="Blagodatski A."/>
            <person name="Kostovska D."/>
            <person name="Koter M."/>
            <person name="Plachy J."/>
            <person name="Carninci P."/>
            <person name="Hayashizaki Y."/>
            <person name="Buerstedde J.-M."/>
        </authorList>
    </citation>
    <scope>NUCLEOTIDE SEQUENCE [LARGE SCALE MRNA]</scope>
    <source>
        <strain>CB</strain>
        <tissue>Bursa of Fabricius</tissue>
    </source>
</reference>
<gene>
    <name type="primary">NATD1</name>
    <name type="synonym">GTLF3B</name>
    <name type="ORF">RCJMB04_17n19</name>
</gene>
<proteinExistence type="inferred from homology"/>
<sequence length="110" mass="12758">MAHSAPLGLLEQGCPIQVEHDRKRRQFTVRLNGCHDRAVLLYEYVGKRIVDLQHTEVPDAYRGRGIAKHLAKAALDFVVEEDLKAHLTCWYIQKYVKENPLPQYLEHLQP</sequence>
<feature type="chain" id="PRO_0000320658" description="Protein NATD1">
    <location>
        <begin position="1"/>
        <end position="110"/>
    </location>
</feature>
<feature type="domain" description="N-acetyltransferase" evidence="1">
    <location>
        <begin position="19"/>
        <end position="109"/>
    </location>
</feature>
<comment type="similarity">
    <text evidence="2">Belongs to the NATD1 family.</text>
</comment>
<keyword id="KW-1185">Reference proteome</keyword>
<accession>Q5ZJI6</accession>